<organism>
    <name type="scientific">Lachnospira eligens (strain ATCC 27750 / DSM 3376 / VPI C15-48 / C15-B4)</name>
    <name type="common">Eubacterium eligens</name>
    <dbReference type="NCBI Taxonomy" id="515620"/>
    <lineage>
        <taxon>Bacteria</taxon>
        <taxon>Bacillati</taxon>
        <taxon>Bacillota</taxon>
        <taxon>Clostridia</taxon>
        <taxon>Lachnospirales</taxon>
        <taxon>Lachnospiraceae</taxon>
        <taxon>Lachnospira</taxon>
    </lineage>
</organism>
<gene>
    <name evidence="1" type="primary">purC</name>
    <name type="ordered locus">EUBELI_00451</name>
</gene>
<sequence length="296" mass="33745">MDELMGKCELLYEGKVREVYDCDDKLVMVATDRISAFDHILKNKVTEKGAILTQMSKFWFDYTKDVVANHMVSVDVNDMPEFFHKDEYIGRSMLCKKLTMLPVECIVRGYITGSGWASYKENGTVCGIKLPEGLKESEKLPEPIYTPSTKAEIGDHDENISFEKSIEVLEKQFPGKGLEYATKIKDATITLYKKCAEYALSKGIIIADTKFEFGLDENGEVVIGDEMLTPDSSRFWPLEGYEAGKSQPSYDKQFVRDWLKANPDSDYLLPDDVIEKTVEKYKEAYKLLTGKDFSRK</sequence>
<protein>
    <recommendedName>
        <fullName evidence="1">Phosphoribosylaminoimidazole-succinocarboxamide synthase</fullName>
        <ecNumber evidence="1">6.3.2.6</ecNumber>
    </recommendedName>
    <alternativeName>
        <fullName evidence="1">SAICAR synthetase</fullName>
    </alternativeName>
</protein>
<comment type="catalytic activity">
    <reaction evidence="1">
        <text>5-amino-1-(5-phospho-D-ribosyl)imidazole-4-carboxylate + L-aspartate + ATP = (2S)-2-[5-amino-1-(5-phospho-beta-D-ribosyl)imidazole-4-carboxamido]succinate + ADP + phosphate + 2 H(+)</text>
        <dbReference type="Rhea" id="RHEA:22628"/>
        <dbReference type="ChEBI" id="CHEBI:15378"/>
        <dbReference type="ChEBI" id="CHEBI:29991"/>
        <dbReference type="ChEBI" id="CHEBI:30616"/>
        <dbReference type="ChEBI" id="CHEBI:43474"/>
        <dbReference type="ChEBI" id="CHEBI:58443"/>
        <dbReference type="ChEBI" id="CHEBI:77657"/>
        <dbReference type="ChEBI" id="CHEBI:456216"/>
        <dbReference type="EC" id="6.3.2.6"/>
    </reaction>
</comment>
<comment type="pathway">
    <text evidence="1">Purine metabolism; IMP biosynthesis via de novo pathway; 5-amino-1-(5-phospho-D-ribosyl)imidazole-4-carboxamide from 5-amino-1-(5-phospho-D-ribosyl)imidazole-4-carboxylate: step 1/2.</text>
</comment>
<comment type="similarity">
    <text evidence="1">Belongs to the SAICAR synthetase family.</text>
</comment>
<reference key="1">
    <citation type="journal article" date="2009" name="Proc. Natl. Acad. Sci. U.S.A.">
        <title>Characterizing a model human gut microbiota composed of members of its two dominant bacterial phyla.</title>
        <authorList>
            <person name="Mahowald M.A."/>
            <person name="Rey F.E."/>
            <person name="Seedorf H."/>
            <person name="Turnbaugh P.J."/>
            <person name="Fulton R.S."/>
            <person name="Wollam A."/>
            <person name="Shah N."/>
            <person name="Wang C."/>
            <person name="Magrini V."/>
            <person name="Wilson R.K."/>
            <person name="Cantarel B.L."/>
            <person name="Coutinho P.M."/>
            <person name="Henrissat B."/>
            <person name="Crock L.W."/>
            <person name="Russell A."/>
            <person name="Verberkmoes N.C."/>
            <person name="Hettich R.L."/>
            <person name="Gordon J.I."/>
        </authorList>
    </citation>
    <scope>NUCLEOTIDE SEQUENCE [LARGE SCALE GENOMIC DNA]</scope>
    <source>
        <strain>ATCC 27750 / DSM 3376 / VPI C15-48 / C15-B4</strain>
    </source>
</reference>
<dbReference type="EC" id="6.3.2.6" evidence="1"/>
<dbReference type="EMBL" id="CP001104">
    <property type="protein sequence ID" value="ACR71467.1"/>
    <property type="molecule type" value="Genomic_DNA"/>
</dbReference>
<dbReference type="RefSeq" id="WP_012738703.1">
    <property type="nucleotide sequence ID" value="NC_012778.1"/>
</dbReference>
<dbReference type="SMR" id="C4Z3J8"/>
<dbReference type="STRING" id="515620.EUBELI_00451"/>
<dbReference type="GeneID" id="41355215"/>
<dbReference type="KEGG" id="eel:EUBELI_00451"/>
<dbReference type="eggNOG" id="COG0152">
    <property type="taxonomic scope" value="Bacteria"/>
</dbReference>
<dbReference type="HOGENOM" id="CLU_045637_0_0_9"/>
<dbReference type="UniPathway" id="UPA00074">
    <property type="reaction ID" value="UER00131"/>
</dbReference>
<dbReference type="Proteomes" id="UP000001476">
    <property type="component" value="Chromosome"/>
</dbReference>
<dbReference type="GO" id="GO:0005737">
    <property type="term" value="C:cytoplasm"/>
    <property type="evidence" value="ECO:0007669"/>
    <property type="project" value="TreeGrafter"/>
</dbReference>
<dbReference type="GO" id="GO:0005524">
    <property type="term" value="F:ATP binding"/>
    <property type="evidence" value="ECO:0007669"/>
    <property type="project" value="UniProtKB-KW"/>
</dbReference>
<dbReference type="GO" id="GO:0004639">
    <property type="term" value="F:phosphoribosylaminoimidazolesuccinocarboxamide synthase activity"/>
    <property type="evidence" value="ECO:0007669"/>
    <property type="project" value="UniProtKB-UniRule"/>
</dbReference>
<dbReference type="GO" id="GO:0006189">
    <property type="term" value="P:'de novo' IMP biosynthetic process"/>
    <property type="evidence" value="ECO:0007669"/>
    <property type="project" value="UniProtKB-UniRule"/>
</dbReference>
<dbReference type="CDD" id="cd01414">
    <property type="entry name" value="SAICAR_synt_Sc"/>
    <property type="match status" value="1"/>
</dbReference>
<dbReference type="FunFam" id="3.30.470.20:FF:000015">
    <property type="entry name" value="Phosphoribosylaminoimidazole-succinocarboxamide synthase"/>
    <property type="match status" value="1"/>
</dbReference>
<dbReference type="Gene3D" id="3.30.470.20">
    <property type="entry name" value="ATP-grasp fold, B domain"/>
    <property type="match status" value="1"/>
</dbReference>
<dbReference type="Gene3D" id="3.30.200.20">
    <property type="entry name" value="Phosphorylase Kinase, domain 1"/>
    <property type="match status" value="1"/>
</dbReference>
<dbReference type="HAMAP" id="MF_00137">
    <property type="entry name" value="SAICAR_synth"/>
    <property type="match status" value="1"/>
</dbReference>
<dbReference type="InterPro" id="IPR028923">
    <property type="entry name" value="SAICAR_synt/ADE2_N"/>
</dbReference>
<dbReference type="InterPro" id="IPR001636">
    <property type="entry name" value="SAICAR_synth"/>
</dbReference>
<dbReference type="InterPro" id="IPR018236">
    <property type="entry name" value="SAICAR_synthetase_CS"/>
</dbReference>
<dbReference type="NCBIfam" id="NF010568">
    <property type="entry name" value="PRK13961.1"/>
    <property type="match status" value="1"/>
</dbReference>
<dbReference type="NCBIfam" id="TIGR00081">
    <property type="entry name" value="purC"/>
    <property type="match status" value="1"/>
</dbReference>
<dbReference type="PANTHER" id="PTHR43700">
    <property type="entry name" value="PHOSPHORIBOSYLAMINOIMIDAZOLE-SUCCINOCARBOXAMIDE SYNTHASE"/>
    <property type="match status" value="1"/>
</dbReference>
<dbReference type="PANTHER" id="PTHR43700:SF1">
    <property type="entry name" value="PHOSPHORIBOSYLAMINOIMIDAZOLE-SUCCINOCARBOXAMIDE SYNTHASE"/>
    <property type="match status" value="1"/>
</dbReference>
<dbReference type="Pfam" id="PF01259">
    <property type="entry name" value="SAICAR_synt"/>
    <property type="match status" value="1"/>
</dbReference>
<dbReference type="SUPFAM" id="SSF56104">
    <property type="entry name" value="SAICAR synthase-like"/>
    <property type="match status" value="1"/>
</dbReference>
<dbReference type="PROSITE" id="PS01057">
    <property type="entry name" value="SAICAR_SYNTHETASE_1"/>
    <property type="match status" value="1"/>
</dbReference>
<dbReference type="PROSITE" id="PS01058">
    <property type="entry name" value="SAICAR_SYNTHETASE_2"/>
    <property type="match status" value="1"/>
</dbReference>
<keyword id="KW-0067">ATP-binding</keyword>
<keyword id="KW-0436">Ligase</keyword>
<keyword id="KW-0547">Nucleotide-binding</keyword>
<keyword id="KW-0658">Purine biosynthesis</keyword>
<keyword id="KW-1185">Reference proteome</keyword>
<proteinExistence type="inferred from homology"/>
<name>PUR7_LACE2</name>
<feature type="chain" id="PRO_1000203228" description="Phosphoribosylaminoimidazole-succinocarboxamide synthase">
    <location>
        <begin position="1"/>
        <end position="296"/>
    </location>
</feature>
<evidence type="ECO:0000255" key="1">
    <source>
        <dbReference type="HAMAP-Rule" id="MF_00137"/>
    </source>
</evidence>
<accession>C4Z3J8</accession>